<accession>Q82TL6</accession>
<gene>
    <name evidence="1" type="primary">potA</name>
    <name type="ordered locus">NE1870</name>
</gene>
<keyword id="KW-0067">ATP-binding</keyword>
<keyword id="KW-0997">Cell inner membrane</keyword>
<keyword id="KW-1003">Cell membrane</keyword>
<keyword id="KW-0472">Membrane</keyword>
<keyword id="KW-0547">Nucleotide-binding</keyword>
<keyword id="KW-1185">Reference proteome</keyword>
<keyword id="KW-1278">Translocase</keyword>
<keyword id="KW-0813">Transport</keyword>
<evidence type="ECO:0000255" key="1">
    <source>
        <dbReference type="HAMAP-Rule" id="MF_01726"/>
    </source>
</evidence>
<dbReference type="EC" id="7.6.2.11" evidence="1"/>
<dbReference type="EMBL" id="AL954747">
    <property type="protein sequence ID" value="CAD85781.1"/>
    <property type="molecule type" value="Genomic_DNA"/>
</dbReference>
<dbReference type="RefSeq" id="WP_011112408.1">
    <property type="nucleotide sequence ID" value="NC_004757.1"/>
</dbReference>
<dbReference type="SMR" id="Q82TL6"/>
<dbReference type="STRING" id="228410.NE1870"/>
<dbReference type="GeneID" id="87105028"/>
<dbReference type="KEGG" id="neu:NE1870"/>
<dbReference type="eggNOG" id="COG3842">
    <property type="taxonomic scope" value="Bacteria"/>
</dbReference>
<dbReference type="HOGENOM" id="CLU_000604_1_1_4"/>
<dbReference type="OrthoDB" id="5298774at2"/>
<dbReference type="PhylomeDB" id="Q82TL6"/>
<dbReference type="Proteomes" id="UP000001416">
    <property type="component" value="Chromosome"/>
</dbReference>
<dbReference type="GO" id="GO:0043190">
    <property type="term" value="C:ATP-binding cassette (ABC) transporter complex"/>
    <property type="evidence" value="ECO:0007669"/>
    <property type="project" value="InterPro"/>
</dbReference>
<dbReference type="GO" id="GO:0015417">
    <property type="term" value="F:ABC-type polyamine transporter activity"/>
    <property type="evidence" value="ECO:0007669"/>
    <property type="project" value="UniProtKB-EC"/>
</dbReference>
<dbReference type="GO" id="GO:0005524">
    <property type="term" value="F:ATP binding"/>
    <property type="evidence" value="ECO:0007669"/>
    <property type="project" value="UniProtKB-KW"/>
</dbReference>
<dbReference type="GO" id="GO:0016887">
    <property type="term" value="F:ATP hydrolysis activity"/>
    <property type="evidence" value="ECO:0007669"/>
    <property type="project" value="InterPro"/>
</dbReference>
<dbReference type="FunFam" id="3.40.50.300:FF:000133">
    <property type="entry name" value="Spermidine/putrescine import ATP-binding protein PotA"/>
    <property type="match status" value="1"/>
</dbReference>
<dbReference type="Gene3D" id="2.40.50.100">
    <property type="match status" value="1"/>
</dbReference>
<dbReference type="Gene3D" id="3.40.50.300">
    <property type="entry name" value="P-loop containing nucleotide triphosphate hydrolases"/>
    <property type="match status" value="1"/>
</dbReference>
<dbReference type="InterPro" id="IPR003593">
    <property type="entry name" value="AAA+_ATPase"/>
</dbReference>
<dbReference type="InterPro" id="IPR050093">
    <property type="entry name" value="ABC_SmlMolc_Importer"/>
</dbReference>
<dbReference type="InterPro" id="IPR003439">
    <property type="entry name" value="ABC_transporter-like_ATP-bd"/>
</dbReference>
<dbReference type="InterPro" id="IPR017871">
    <property type="entry name" value="ABC_transporter-like_CS"/>
</dbReference>
<dbReference type="InterPro" id="IPR008995">
    <property type="entry name" value="Mo/tungstate-bd_C_term_dom"/>
</dbReference>
<dbReference type="InterPro" id="IPR027417">
    <property type="entry name" value="P-loop_NTPase"/>
</dbReference>
<dbReference type="InterPro" id="IPR005893">
    <property type="entry name" value="PotA-like"/>
</dbReference>
<dbReference type="InterPro" id="IPR013611">
    <property type="entry name" value="Transp-assoc_OB_typ2"/>
</dbReference>
<dbReference type="NCBIfam" id="TIGR01187">
    <property type="entry name" value="potA"/>
    <property type="match status" value="1"/>
</dbReference>
<dbReference type="PANTHER" id="PTHR42781">
    <property type="entry name" value="SPERMIDINE/PUTRESCINE IMPORT ATP-BINDING PROTEIN POTA"/>
    <property type="match status" value="1"/>
</dbReference>
<dbReference type="PANTHER" id="PTHR42781:SF4">
    <property type="entry name" value="SPERMIDINE_PUTRESCINE IMPORT ATP-BINDING PROTEIN POTA"/>
    <property type="match status" value="1"/>
</dbReference>
<dbReference type="Pfam" id="PF00005">
    <property type="entry name" value="ABC_tran"/>
    <property type="match status" value="1"/>
</dbReference>
<dbReference type="Pfam" id="PF08402">
    <property type="entry name" value="TOBE_2"/>
    <property type="match status" value="1"/>
</dbReference>
<dbReference type="SMART" id="SM00382">
    <property type="entry name" value="AAA"/>
    <property type="match status" value="1"/>
</dbReference>
<dbReference type="SUPFAM" id="SSF50331">
    <property type="entry name" value="MOP-like"/>
    <property type="match status" value="1"/>
</dbReference>
<dbReference type="SUPFAM" id="SSF52540">
    <property type="entry name" value="P-loop containing nucleoside triphosphate hydrolases"/>
    <property type="match status" value="1"/>
</dbReference>
<dbReference type="PROSITE" id="PS00211">
    <property type="entry name" value="ABC_TRANSPORTER_1"/>
    <property type="match status" value="1"/>
</dbReference>
<dbReference type="PROSITE" id="PS50893">
    <property type="entry name" value="ABC_TRANSPORTER_2"/>
    <property type="match status" value="1"/>
</dbReference>
<dbReference type="PROSITE" id="PS51305">
    <property type="entry name" value="POTA"/>
    <property type="match status" value="1"/>
</dbReference>
<name>POTA_NITEU</name>
<comment type="function">
    <text evidence="1">Part of the ABC transporter complex PotABCD involved in spermidine/putrescine import. Responsible for energy coupling to the transport system.</text>
</comment>
<comment type="catalytic activity">
    <reaction evidence="1">
        <text>ATP + H2O + polyamine-[polyamine-binding protein]Side 1 = ADP + phosphate + polyamineSide 2 + [polyamine-binding protein]Side 1.</text>
        <dbReference type="EC" id="7.6.2.11"/>
    </reaction>
</comment>
<comment type="subunit">
    <text evidence="1">The complex is composed of two ATP-binding proteins (PotA), two transmembrane proteins (PotB and PotC) and a solute-binding protein (PotD).</text>
</comment>
<comment type="subcellular location">
    <subcellularLocation>
        <location evidence="1">Cell inner membrane</location>
        <topology evidence="1">Peripheral membrane protein</topology>
    </subcellularLocation>
</comment>
<comment type="similarity">
    <text evidence="1">Belongs to the ABC transporter superfamily. Spermidine/putrescine importer (TC 3.A.1.11.1) family.</text>
</comment>
<sequence length="361" mass="39896">MALLELRDVTRRFGDFTAVDCVNLSIEAGELFTLLGPSGCGKTTLLRMIAGFDVPDSGQILLDGQDIANTPPEKRPIHTVFQSYALFPHMTVADNVAFPLKMSGKTPAEIKKRVEKALEEVQLSRFTHRFPHELSGGQKQRVAFARGLINRPRLLLMDEPLGALDAKLREDMQRELISLQKEVGITFVFVTHSQDEALALSQRIAVMNQGQVEQIGEPSVIYSHPANRFIADFIGKINLMAARVTQVSDNDMTLEIDQLGTTTLPLKQGIKTGDQGVMAIRPEQVSVHALARHAELPHAHTGKVLDFLYVGDVTTYIVELDCGIRVEALLANSSPGRARFFEVGDPVIVSWTREAAQFLMN</sequence>
<reference key="1">
    <citation type="journal article" date="2003" name="J. Bacteriol.">
        <title>Complete genome sequence of the ammonia-oxidizing bacterium and obligate chemolithoautotroph Nitrosomonas europaea.</title>
        <authorList>
            <person name="Chain P."/>
            <person name="Lamerdin J.E."/>
            <person name="Larimer F.W."/>
            <person name="Regala W."/>
            <person name="Lao V."/>
            <person name="Land M.L."/>
            <person name="Hauser L."/>
            <person name="Hooper A.B."/>
            <person name="Klotz M.G."/>
            <person name="Norton J."/>
            <person name="Sayavedra-Soto L.A."/>
            <person name="Arciero D.M."/>
            <person name="Hommes N.G."/>
            <person name="Whittaker M.M."/>
            <person name="Arp D.J."/>
        </authorList>
    </citation>
    <scope>NUCLEOTIDE SEQUENCE [LARGE SCALE GENOMIC DNA]</scope>
    <source>
        <strain>ATCC 19718 / CIP 103999 / KCTC 2705 / NBRC 14298</strain>
    </source>
</reference>
<protein>
    <recommendedName>
        <fullName evidence="1">Spermidine/putrescine import ATP-binding protein PotA</fullName>
        <ecNumber evidence="1">7.6.2.11</ecNumber>
    </recommendedName>
</protein>
<organism>
    <name type="scientific">Nitrosomonas europaea (strain ATCC 19718 / CIP 103999 / KCTC 2705 / NBRC 14298)</name>
    <dbReference type="NCBI Taxonomy" id="228410"/>
    <lineage>
        <taxon>Bacteria</taxon>
        <taxon>Pseudomonadati</taxon>
        <taxon>Pseudomonadota</taxon>
        <taxon>Betaproteobacteria</taxon>
        <taxon>Nitrosomonadales</taxon>
        <taxon>Nitrosomonadaceae</taxon>
        <taxon>Nitrosomonas</taxon>
    </lineage>
</organism>
<feature type="chain" id="PRO_0000286264" description="Spermidine/putrescine import ATP-binding protein PotA">
    <location>
        <begin position="1"/>
        <end position="361"/>
    </location>
</feature>
<feature type="domain" description="ABC transporter" evidence="1">
    <location>
        <begin position="4"/>
        <end position="234"/>
    </location>
</feature>
<feature type="binding site" evidence="1">
    <location>
        <begin position="36"/>
        <end position="43"/>
    </location>
    <ligand>
        <name>ATP</name>
        <dbReference type="ChEBI" id="CHEBI:30616"/>
    </ligand>
</feature>
<proteinExistence type="inferred from homology"/>